<name>NHAA_HELPY</name>
<dbReference type="EMBL" id="AE000511">
    <property type="protein sequence ID" value="AAD08592.1"/>
    <property type="molecule type" value="Genomic_DNA"/>
</dbReference>
<dbReference type="PIR" id="H64713">
    <property type="entry name" value="H64713"/>
</dbReference>
<dbReference type="RefSeq" id="NP_208343.1">
    <property type="nucleotide sequence ID" value="NC_000915.1"/>
</dbReference>
<dbReference type="RefSeq" id="WP_001049644.1">
    <property type="nucleotide sequence ID" value="NC_018939.1"/>
</dbReference>
<dbReference type="SMR" id="O26076"/>
<dbReference type="FunCoup" id="O26076">
    <property type="interactions" value="51"/>
</dbReference>
<dbReference type="STRING" id="85962.HP_1552"/>
<dbReference type="PaxDb" id="85962-C694_08040"/>
<dbReference type="EnsemblBacteria" id="AAD08592">
    <property type="protein sequence ID" value="AAD08592"/>
    <property type="gene ID" value="HP_1552"/>
</dbReference>
<dbReference type="KEGG" id="heo:C694_08040"/>
<dbReference type="KEGG" id="hpy:HP_1552"/>
<dbReference type="PATRIC" id="fig|85962.47.peg.1667"/>
<dbReference type="eggNOG" id="COG3004">
    <property type="taxonomic scope" value="Bacteria"/>
</dbReference>
<dbReference type="InParanoid" id="O26076"/>
<dbReference type="OrthoDB" id="9808135at2"/>
<dbReference type="PhylomeDB" id="O26076"/>
<dbReference type="Proteomes" id="UP000000429">
    <property type="component" value="Chromosome"/>
</dbReference>
<dbReference type="GO" id="GO:0005886">
    <property type="term" value="C:plasma membrane"/>
    <property type="evidence" value="ECO:0000318"/>
    <property type="project" value="GO_Central"/>
</dbReference>
<dbReference type="GO" id="GO:0015385">
    <property type="term" value="F:sodium:proton antiporter activity"/>
    <property type="evidence" value="ECO:0000318"/>
    <property type="project" value="GO_Central"/>
</dbReference>
<dbReference type="GO" id="GO:0006885">
    <property type="term" value="P:regulation of pH"/>
    <property type="evidence" value="ECO:0007669"/>
    <property type="project" value="InterPro"/>
</dbReference>
<dbReference type="Gene3D" id="1.20.1530.10">
    <property type="entry name" value="Na+/H+ antiporter like domain"/>
    <property type="match status" value="1"/>
</dbReference>
<dbReference type="HAMAP" id="MF_01844">
    <property type="entry name" value="NhaA"/>
    <property type="match status" value="1"/>
</dbReference>
<dbReference type="InterPro" id="IPR023171">
    <property type="entry name" value="Na/H_antiporter_dom_sf"/>
</dbReference>
<dbReference type="InterPro" id="IPR004670">
    <property type="entry name" value="NhaA"/>
</dbReference>
<dbReference type="NCBIfam" id="TIGR00773">
    <property type="entry name" value="NhaA"/>
    <property type="match status" value="1"/>
</dbReference>
<dbReference type="NCBIfam" id="NF011428">
    <property type="entry name" value="PRK14856.1"/>
    <property type="match status" value="1"/>
</dbReference>
<dbReference type="PANTHER" id="PTHR30341:SF0">
    <property type="entry name" value="NA(+)_H(+) ANTIPORTER NHAA"/>
    <property type="match status" value="1"/>
</dbReference>
<dbReference type="PANTHER" id="PTHR30341">
    <property type="entry name" value="SODIUM ION/PROTON ANTIPORTER NHAA-RELATED"/>
    <property type="match status" value="1"/>
</dbReference>
<dbReference type="Pfam" id="PF06965">
    <property type="entry name" value="Na_H_antiport_1"/>
    <property type="match status" value="1"/>
</dbReference>
<accession>O26076</accession>
<sequence length="438" mass="47759">MNLKKTENALSLTLKNFIKSESFGGIFLFLNAVLAMVVANSFLKESYFALWHTPFGFQIGDFFIGFSLHNWIDDVLMALFFLMIGLEIKRELLFGELSSFKKASFPVIAAIGGMIAPGLIYFFLNANTPSQHGFGIPMATDIAFALGVIMLLGKRVPTALKVFLITLAVADDLGAIVVIALFYTTNLKFAWLLGALGVVLVLAVLNRLNMRSLIPYLLLGVLLWFCVHQSGIHATIAAVILAFMIPVKIPKDSKNVELLELGKRYAETSSGALLSKEQQEILHSIEEKASALQSPLERLEHFLAPISGYFIMPLFAFANAGVSVDSSINLEVDKVLLGVILGLCLGKPLGIFLITFISEKLKITARPKGISWWHILGAGLLAGIGFTMSMFISNLAFTSEHKDAMEVAKIAILLGSLISGIIGALYLFALDKRAALKK</sequence>
<comment type="function">
    <text evidence="1">Na(+)/H(+) antiporter that extrudes sodium in exchange for external protons.</text>
</comment>
<comment type="catalytic activity">
    <reaction evidence="1">
        <text>Na(+)(in) + 2 H(+)(out) = Na(+)(out) + 2 H(+)(in)</text>
        <dbReference type="Rhea" id="RHEA:29251"/>
        <dbReference type="ChEBI" id="CHEBI:15378"/>
        <dbReference type="ChEBI" id="CHEBI:29101"/>
    </reaction>
    <physiologicalReaction direction="left-to-right" evidence="1">
        <dbReference type="Rhea" id="RHEA:29252"/>
    </physiologicalReaction>
</comment>
<comment type="subcellular location">
    <subcellularLocation>
        <location evidence="1">Cell inner membrane</location>
        <topology evidence="1">Multi-pass membrane protein</topology>
    </subcellularLocation>
</comment>
<comment type="similarity">
    <text evidence="1">Belongs to the NhaA Na(+)/H(+) (TC 2.A.33) antiporter family.</text>
</comment>
<protein>
    <recommendedName>
        <fullName evidence="1">Na(+)/H(+) antiporter NhaA</fullName>
    </recommendedName>
    <alternativeName>
        <fullName evidence="1">Sodium/proton antiporter NhaA</fullName>
    </alternativeName>
</protein>
<reference key="1">
    <citation type="journal article" date="1997" name="Nature">
        <title>The complete genome sequence of the gastric pathogen Helicobacter pylori.</title>
        <authorList>
            <person name="Tomb J.-F."/>
            <person name="White O."/>
            <person name="Kerlavage A.R."/>
            <person name="Clayton R.A."/>
            <person name="Sutton G.G."/>
            <person name="Fleischmann R.D."/>
            <person name="Ketchum K.A."/>
            <person name="Klenk H.-P."/>
            <person name="Gill S.R."/>
            <person name="Dougherty B.A."/>
            <person name="Nelson K.E."/>
            <person name="Quackenbush J."/>
            <person name="Zhou L."/>
            <person name="Kirkness E.F."/>
            <person name="Peterson S.N."/>
            <person name="Loftus B.J."/>
            <person name="Richardson D.L."/>
            <person name="Dodson R.J."/>
            <person name="Khalak H.G."/>
            <person name="Glodek A."/>
            <person name="McKenney K."/>
            <person name="FitzGerald L.M."/>
            <person name="Lee N."/>
            <person name="Adams M.D."/>
            <person name="Hickey E.K."/>
            <person name="Berg D.E."/>
            <person name="Gocayne J.D."/>
            <person name="Utterback T.R."/>
            <person name="Peterson J.D."/>
            <person name="Kelley J.M."/>
            <person name="Cotton M.D."/>
            <person name="Weidman J.F."/>
            <person name="Fujii C."/>
            <person name="Bowman C."/>
            <person name="Watthey L."/>
            <person name="Wallin E."/>
            <person name="Hayes W.S."/>
            <person name="Borodovsky M."/>
            <person name="Karp P.D."/>
            <person name="Smith H.O."/>
            <person name="Fraser C.M."/>
            <person name="Venter J.C."/>
        </authorList>
    </citation>
    <scope>NUCLEOTIDE SEQUENCE [LARGE SCALE GENOMIC DNA]</scope>
    <source>
        <strain>ATCC 700392 / 26695</strain>
    </source>
</reference>
<organism>
    <name type="scientific">Helicobacter pylori (strain ATCC 700392 / 26695)</name>
    <name type="common">Campylobacter pylori</name>
    <dbReference type="NCBI Taxonomy" id="85962"/>
    <lineage>
        <taxon>Bacteria</taxon>
        <taxon>Pseudomonadati</taxon>
        <taxon>Campylobacterota</taxon>
        <taxon>Epsilonproteobacteria</taxon>
        <taxon>Campylobacterales</taxon>
        <taxon>Helicobacteraceae</taxon>
        <taxon>Helicobacter</taxon>
    </lineage>
</organism>
<gene>
    <name evidence="1" type="primary">nhaA</name>
    <name type="ordered locus">HP_1552</name>
</gene>
<keyword id="KW-0050">Antiport</keyword>
<keyword id="KW-0997">Cell inner membrane</keyword>
<keyword id="KW-1003">Cell membrane</keyword>
<keyword id="KW-0406">Ion transport</keyword>
<keyword id="KW-0472">Membrane</keyword>
<keyword id="KW-1185">Reference proteome</keyword>
<keyword id="KW-0915">Sodium</keyword>
<keyword id="KW-0739">Sodium transport</keyword>
<keyword id="KW-0812">Transmembrane</keyword>
<keyword id="KW-1133">Transmembrane helix</keyword>
<keyword id="KW-0813">Transport</keyword>
<evidence type="ECO:0000255" key="1">
    <source>
        <dbReference type="HAMAP-Rule" id="MF_01844"/>
    </source>
</evidence>
<feature type="chain" id="PRO_0000334320" description="Na(+)/H(+) antiporter NhaA">
    <location>
        <begin position="1"/>
        <end position="438"/>
    </location>
</feature>
<feature type="transmembrane region" description="Helical" evidence="1">
    <location>
        <begin position="23"/>
        <end position="43"/>
    </location>
</feature>
<feature type="transmembrane region" description="Helical" evidence="1">
    <location>
        <begin position="62"/>
        <end position="82"/>
    </location>
</feature>
<feature type="transmembrane region" description="Helical" evidence="1">
    <location>
        <begin position="104"/>
        <end position="124"/>
    </location>
</feature>
<feature type="transmembrane region" description="Helical" evidence="1">
    <location>
        <begin position="133"/>
        <end position="153"/>
    </location>
</feature>
<feature type="transmembrane region" description="Helical" evidence="1">
    <location>
        <begin position="162"/>
        <end position="182"/>
    </location>
</feature>
<feature type="transmembrane region" description="Helical" evidence="1">
    <location>
        <begin position="185"/>
        <end position="205"/>
    </location>
</feature>
<feature type="transmembrane region" description="Helical" evidence="1">
    <location>
        <begin position="221"/>
        <end position="241"/>
    </location>
</feature>
<feature type="transmembrane region" description="Helical" evidence="1">
    <location>
        <begin position="302"/>
        <end position="322"/>
    </location>
</feature>
<feature type="transmembrane region" description="Helical" evidence="1">
    <location>
        <begin position="337"/>
        <end position="357"/>
    </location>
</feature>
<feature type="transmembrane region" description="Helical" evidence="1">
    <location>
        <begin position="372"/>
        <end position="392"/>
    </location>
</feature>
<feature type="transmembrane region" description="Helical" evidence="1">
    <location>
        <begin position="410"/>
        <end position="430"/>
    </location>
</feature>
<proteinExistence type="inferred from homology"/>